<comment type="function">
    <text evidence="1">Involved in mRNA degradation. Catalyzes the phosphorolysis of single-stranded polyribonucleotides processively in the 3'- to 5'-direction.</text>
</comment>
<comment type="catalytic activity">
    <reaction evidence="1">
        <text>RNA(n+1) + phosphate = RNA(n) + a ribonucleoside 5'-diphosphate</text>
        <dbReference type="Rhea" id="RHEA:22096"/>
        <dbReference type="Rhea" id="RHEA-COMP:14527"/>
        <dbReference type="Rhea" id="RHEA-COMP:17342"/>
        <dbReference type="ChEBI" id="CHEBI:43474"/>
        <dbReference type="ChEBI" id="CHEBI:57930"/>
        <dbReference type="ChEBI" id="CHEBI:140395"/>
        <dbReference type="EC" id="2.7.7.8"/>
    </reaction>
</comment>
<comment type="cofactor">
    <cofactor evidence="1">
        <name>Mg(2+)</name>
        <dbReference type="ChEBI" id="CHEBI:18420"/>
    </cofactor>
</comment>
<comment type="subunit">
    <text evidence="1">Component of the RNA degradosome, which is a multiprotein complex involved in RNA processing and mRNA degradation.</text>
</comment>
<comment type="subcellular location">
    <subcellularLocation>
        <location evidence="1">Cytoplasm</location>
    </subcellularLocation>
</comment>
<comment type="similarity">
    <text evidence="1">Belongs to the polyribonucleotide nucleotidyltransferase family.</text>
</comment>
<comment type="sequence caution" evidence="3">
    <conflict type="erroneous initiation">
        <sequence resource="EMBL-CDS" id="ABE09040"/>
    </conflict>
</comment>
<proteinExistence type="inferred from homology"/>
<protein>
    <recommendedName>
        <fullName evidence="1">Polyribonucleotide nucleotidyltransferase</fullName>
        <ecNumber evidence="1">2.7.7.8</ecNumber>
    </recommendedName>
    <alternativeName>
        <fullName evidence="1">Polynucleotide phosphorylase</fullName>
        <shortName evidence="1">PNPase</shortName>
    </alternativeName>
</protein>
<evidence type="ECO:0000255" key="1">
    <source>
        <dbReference type="HAMAP-Rule" id="MF_01595"/>
    </source>
</evidence>
<evidence type="ECO:0000256" key="2">
    <source>
        <dbReference type="SAM" id="MobiDB-lite"/>
    </source>
</evidence>
<evidence type="ECO:0000305" key="3"/>
<reference key="1">
    <citation type="journal article" date="2006" name="Proc. Natl. Acad. Sci. U.S.A.">
        <title>Identification of genes subject to positive selection in uropathogenic strains of Escherichia coli: a comparative genomics approach.</title>
        <authorList>
            <person name="Chen S.L."/>
            <person name="Hung C.-S."/>
            <person name="Xu J."/>
            <person name="Reigstad C.S."/>
            <person name="Magrini V."/>
            <person name="Sabo A."/>
            <person name="Blasiar D."/>
            <person name="Bieri T."/>
            <person name="Meyer R.R."/>
            <person name="Ozersky P."/>
            <person name="Armstrong J.R."/>
            <person name="Fulton R.S."/>
            <person name="Latreille J.P."/>
            <person name="Spieth J."/>
            <person name="Hooton T.M."/>
            <person name="Mardis E.R."/>
            <person name="Hultgren S.J."/>
            <person name="Gordon J.I."/>
        </authorList>
    </citation>
    <scope>NUCLEOTIDE SEQUENCE [LARGE SCALE GENOMIC DNA]</scope>
    <source>
        <strain>UTI89 / UPEC</strain>
    </source>
</reference>
<dbReference type="EC" id="2.7.7.8" evidence="1"/>
<dbReference type="EMBL" id="CP000243">
    <property type="protein sequence ID" value="ABE09040.1"/>
    <property type="status" value="ALT_INIT"/>
    <property type="molecule type" value="Genomic_DNA"/>
</dbReference>
<dbReference type="RefSeq" id="WP_001298330.1">
    <property type="nucleotide sequence ID" value="NZ_CP064825.1"/>
</dbReference>
<dbReference type="SMR" id="Q1R6H4"/>
<dbReference type="KEGG" id="eci:UTI89_C3594"/>
<dbReference type="HOGENOM" id="CLU_004217_2_2_6"/>
<dbReference type="Proteomes" id="UP000001952">
    <property type="component" value="Chromosome"/>
</dbReference>
<dbReference type="GO" id="GO:0005829">
    <property type="term" value="C:cytosol"/>
    <property type="evidence" value="ECO:0007669"/>
    <property type="project" value="TreeGrafter"/>
</dbReference>
<dbReference type="GO" id="GO:0000175">
    <property type="term" value="F:3'-5'-RNA exonuclease activity"/>
    <property type="evidence" value="ECO:0007669"/>
    <property type="project" value="TreeGrafter"/>
</dbReference>
<dbReference type="GO" id="GO:0000287">
    <property type="term" value="F:magnesium ion binding"/>
    <property type="evidence" value="ECO:0007669"/>
    <property type="project" value="UniProtKB-UniRule"/>
</dbReference>
<dbReference type="GO" id="GO:0004654">
    <property type="term" value="F:polyribonucleotide nucleotidyltransferase activity"/>
    <property type="evidence" value="ECO:0007669"/>
    <property type="project" value="UniProtKB-UniRule"/>
</dbReference>
<dbReference type="GO" id="GO:0003723">
    <property type="term" value="F:RNA binding"/>
    <property type="evidence" value="ECO:0007669"/>
    <property type="project" value="UniProtKB-UniRule"/>
</dbReference>
<dbReference type="GO" id="GO:0006402">
    <property type="term" value="P:mRNA catabolic process"/>
    <property type="evidence" value="ECO:0007669"/>
    <property type="project" value="UniProtKB-UniRule"/>
</dbReference>
<dbReference type="GO" id="GO:0006396">
    <property type="term" value="P:RNA processing"/>
    <property type="evidence" value="ECO:0007669"/>
    <property type="project" value="InterPro"/>
</dbReference>
<dbReference type="CDD" id="cd02393">
    <property type="entry name" value="KH-I_PNPase"/>
    <property type="match status" value="1"/>
</dbReference>
<dbReference type="CDD" id="cd11363">
    <property type="entry name" value="RNase_PH_PNPase_1"/>
    <property type="match status" value="1"/>
</dbReference>
<dbReference type="CDD" id="cd11364">
    <property type="entry name" value="RNase_PH_PNPase_2"/>
    <property type="match status" value="1"/>
</dbReference>
<dbReference type="CDD" id="cd04472">
    <property type="entry name" value="S1_PNPase"/>
    <property type="match status" value="1"/>
</dbReference>
<dbReference type="FunFam" id="2.40.50.140:FF:000023">
    <property type="entry name" value="Polyribonucleotide nucleotidyltransferase"/>
    <property type="match status" value="1"/>
</dbReference>
<dbReference type="FunFam" id="3.30.1370.10:FF:000001">
    <property type="entry name" value="Polyribonucleotide nucleotidyltransferase"/>
    <property type="match status" value="1"/>
</dbReference>
<dbReference type="FunFam" id="3.30.230.70:FF:000001">
    <property type="entry name" value="Polyribonucleotide nucleotidyltransferase"/>
    <property type="match status" value="1"/>
</dbReference>
<dbReference type="FunFam" id="3.30.230.70:FF:000002">
    <property type="entry name" value="Polyribonucleotide nucleotidyltransferase"/>
    <property type="match status" value="1"/>
</dbReference>
<dbReference type="Gene3D" id="3.30.230.70">
    <property type="entry name" value="GHMP Kinase, N-terminal domain"/>
    <property type="match status" value="2"/>
</dbReference>
<dbReference type="Gene3D" id="3.30.1370.10">
    <property type="entry name" value="K Homology domain, type 1"/>
    <property type="match status" value="1"/>
</dbReference>
<dbReference type="Gene3D" id="2.40.50.140">
    <property type="entry name" value="Nucleic acid-binding proteins"/>
    <property type="match status" value="1"/>
</dbReference>
<dbReference type="HAMAP" id="MF_01595">
    <property type="entry name" value="PNPase"/>
    <property type="match status" value="1"/>
</dbReference>
<dbReference type="InterPro" id="IPR001247">
    <property type="entry name" value="ExoRNase_PH_dom1"/>
</dbReference>
<dbReference type="InterPro" id="IPR015847">
    <property type="entry name" value="ExoRNase_PH_dom2"/>
</dbReference>
<dbReference type="InterPro" id="IPR036345">
    <property type="entry name" value="ExoRNase_PH_dom2_sf"/>
</dbReference>
<dbReference type="InterPro" id="IPR004087">
    <property type="entry name" value="KH_dom"/>
</dbReference>
<dbReference type="InterPro" id="IPR004088">
    <property type="entry name" value="KH_dom_type_1"/>
</dbReference>
<dbReference type="InterPro" id="IPR036612">
    <property type="entry name" value="KH_dom_type_1_sf"/>
</dbReference>
<dbReference type="InterPro" id="IPR012340">
    <property type="entry name" value="NA-bd_OB-fold"/>
</dbReference>
<dbReference type="InterPro" id="IPR012162">
    <property type="entry name" value="PNPase"/>
</dbReference>
<dbReference type="InterPro" id="IPR027408">
    <property type="entry name" value="PNPase/RNase_PH_dom_sf"/>
</dbReference>
<dbReference type="InterPro" id="IPR015848">
    <property type="entry name" value="PNPase_PH_RNA-bd_bac/org-type"/>
</dbReference>
<dbReference type="InterPro" id="IPR036456">
    <property type="entry name" value="PNPase_PH_RNA-bd_sf"/>
</dbReference>
<dbReference type="InterPro" id="IPR020568">
    <property type="entry name" value="Ribosomal_Su5_D2-typ_SF"/>
</dbReference>
<dbReference type="InterPro" id="IPR003029">
    <property type="entry name" value="S1_domain"/>
</dbReference>
<dbReference type="NCBIfam" id="TIGR03591">
    <property type="entry name" value="polynuc_phos"/>
    <property type="match status" value="1"/>
</dbReference>
<dbReference type="NCBIfam" id="NF008805">
    <property type="entry name" value="PRK11824.1"/>
    <property type="match status" value="1"/>
</dbReference>
<dbReference type="PANTHER" id="PTHR11252">
    <property type="entry name" value="POLYRIBONUCLEOTIDE NUCLEOTIDYLTRANSFERASE"/>
    <property type="match status" value="1"/>
</dbReference>
<dbReference type="PANTHER" id="PTHR11252:SF0">
    <property type="entry name" value="POLYRIBONUCLEOTIDE NUCLEOTIDYLTRANSFERASE 1, MITOCHONDRIAL"/>
    <property type="match status" value="1"/>
</dbReference>
<dbReference type="Pfam" id="PF00013">
    <property type="entry name" value="KH_1"/>
    <property type="match status" value="1"/>
</dbReference>
<dbReference type="Pfam" id="PF03726">
    <property type="entry name" value="PNPase"/>
    <property type="match status" value="1"/>
</dbReference>
<dbReference type="Pfam" id="PF01138">
    <property type="entry name" value="RNase_PH"/>
    <property type="match status" value="2"/>
</dbReference>
<dbReference type="Pfam" id="PF03725">
    <property type="entry name" value="RNase_PH_C"/>
    <property type="match status" value="2"/>
</dbReference>
<dbReference type="Pfam" id="PF00575">
    <property type="entry name" value="S1"/>
    <property type="match status" value="1"/>
</dbReference>
<dbReference type="PIRSF" id="PIRSF005499">
    <property type="entry name" value="PNPase"/>
    <property type="match status" value="1"/>
</dbReference>
<dbReference type="SMART" id="SM00322">
    <property type="entry name" value="KH"/>
    <property type="match status" value="1"/>
</dbReference>
<dbReference type="SMART" id="SM00316">
    <property type="entry name" value="S1"/>
    <property type="match status" value="1"/>
</dbReference>
<dbReference type="SUPFAM" id="SSF54791">
    <property type="entry name" value="Eukaryotic type KH-domain (KH-domain type I)"/>
    <property type="match status" value="1"/>
</dbReference>
<dbReference type="SUPFAM" id="SSF50249">
    <property type="entry name" value="Nucleic acid-binding proteins"/>
    <property type="match status" value="1"/>
</dbReference>
<dbReference type="SUPFAM" id="SSF46915">
    <property type="entry name" value="Polynucleotide phosphorylase/guanosine pentaphosphate synthase (PNPase/GPSI), domain 3"/>
    <property type="match status" value="1"/>
</dbReference>
<dbReference type="SUPFAM" id="SSF55666">
    <property type="entry name" value="Ribonuclease PH domain 2-like"/>
    <property type="match status" value="2"/>
</dbReference>
<dbReference type="SUPFAM" id="SSF54211">
    <property type="entry name" value="Ribosomal protein S5 domain 2-like"/>
    <property type="match status" value="2"/>
</dbReference>
<dbReference type="PROSITE" id="PS50084">
    <property type="entry name" value="KH_TYPE_1"/>
    <property type="match status" value="1"/>
</dbReference>
<dbReference type="PROSITE" id="PS50126">
    <property type="entry name" value="S1"/>
    <property type="match status" value="1"/>
</dbReference>
<feature type="chain" id="PRO_0000329639" description="Polyribonucleotide nucleotidyltransferase">
    <location>
        <begin position="1"/>
        <end position="711"/>
    </location>
</feature>
<feature type="domain" description="KH" evidence="1">
    <location>
        <begin position="553"/>
        <end position="612"/>
    </location>
</feature>
<feature type="domain" description="S1 motif" evidence="1">
    <location>
        <begin position="622"/>
        <end position="690"/>
    </location>
</feature>
<feature type="region of interest" description="Disordered" evidence="2">
    <location>
        <begin position="689"/>
        <end position="711"/>
    </location>
</feature>
<feature type="compositionally biased region" description="Low complexity" evidence="2">
    <location>
        <begin position="694"/>
        <end position="711"/>
    </location>
</feature>
<feature type="binding site" evidence="1">
    <location>
        <position position="486"/>
    </location>
    <ligand>
        <name>Mg(2+)</name>
        <dbReference type="ChEBI" id="CHEBI:18420"/>
    </ligand>
</feature>
<feature type="binding site" evidence="1">
    <location>
        <position position="492"/>
    </location>
    <ligand>
        <name>Mg(2+)</name>
        <dbReference type="ChEBI" id="CHEBI:18420"/>
    </ligand>
</feature>
<name>PNP_ECOUT</name>
<gene>
    <name evidence="1" type="primary">pnp</name>
    <name type="ordered locus">UTI89_C3594</name>
</gene>
<organism>
    <name type="scientific">Escherichia coli (strain UTI89 / UPEC)</name>
    <dbReference type="NCBI Taxonomy" id="364106"/>
    <lineage>
        <taxon>Bacteria</taxon>
        <taxon>Pseudomonadati</taxon>
        <taxon>Pseudomonadota</taxon>
        <taxon>Gammaproteobacteria</taxon>
        <taxon>Enterobacterales</taxon>
        <taxon>Enterobacteriaceae</taxon>
        <taxon>Escherichia</taxon>
    </lineage>
</organism>
<keyword id="KW-0963">Cytoplasm</keyword>
<keyword id="KW-0460">Magnesium</keyword>
<keyword id="KW-0479">Metal-binding</keyword>
<keyword id="KW-0548">Nucleotidyltransferase</keyword>
<keyword id="KW-0694">RNA-binding</keyword>
<keyword id="KW-0808">Transferase</keyword>
<accession>Q1R6H4</accession>
<sequence length="711" mass="77115">MLNPIVRKFQYGQHTVTLETGMMARQATAAVMVSMDDTAVFVTVVGQKKAKPGQDFFPLTVNYQERTYAAGRIPGSFFRREGRPSEGETLIARLIDRPIRPLFPEGFVNEVQVIATVVSVNPQVNPDIVAMIGASAALSLSGIPFNGPIGAARVGYINDQYVLNPTQDELKESKLDLVVAGTEAAVLMVESEAELLSEDQMLGAVVFGHEQQQVVIQNINELVKEAGKPRWDWQPEPVNEALNARVAALAEARLSDAYRITDKQERYAQVDVIKSETIATLLAEDETLDENELGEILHAIEKNVVRSRVLAGEPRIDGREKDMIRGLDVRTGVLPRTHGSALFTRGETQALVTATLGTARDAQVLDELMGERTDTFLFHYNFPPYSVGETGMVGSPKRREIGHGRLAKRGVLAVMPDMDKFPYTVRVVSEITESNGSSSMASVCGASLALMDAGVPIKAAVAGIAMGLVKEGDNYVVLSDILGDEDHLGDMDFKVAGSRDGISALQMDIKIEGITKEIMQVALNQAKGARLHILGVMEQAINAPRGDISEFAPRIHTIKINPDKIKDVIGKGGSVIRALTEETGTTIEIEDDGTVKIAATDGEKAKHAIRRIEEITAEIEVGRVYNGKVTRIVDFGAFVAIGGGKEGLVHISQIADKRVEKVTDYLQMGQEVPVKVLEVDRQGRIRLSIKEATEQSQPAAAPEAPAAEQGE</sequence>